<accession>O03521</accession>
<name>COX1_CASBE</name>
<dbReference type="EC" id="7.1.1.9"/>
<dbReference type="EMBL" id="U76058">
    <property type="protein sequence ID" value="AAB61316.1"/>
    <property type="molecule type" value="Genomic_DNA"/>
</dbReference>
<dbReference type="SMR" id="O03521"/>
<dbReference type="UniPathway" id="UPA00705"/>
<dbReference type="GO" id="GO:0005743">
    <property type="term" value="C:mitochondrial inner membrane"/>
    <property type="evidence" value="ECO:0007669"/>
    <property type="project" value="UniProtKB-SubCell"/>
</dbReference>
<dbReference type="GO" id="GO:0045277">
    <property type="term" value="C:respiratory chain complex IV"/>
    <property type="evidence" value="ECO:0000250"/>
    <property type="project" value="UniProtKB"/>
</dbReference>
<dbReference type="GO" id="GO:0004129">
    <property type="term" value="F:cytochrome-c oxidase activity"/>
    <property type="evidence" value="ECO:0007669"/>
    <property type="project" value="UniProtKB-EC"/>
</dbReference>
<dbReference type="GO" id="GO:0020037">
    <property type="term" value="F:heme binding"/>
    <property type="evidence" value="ECO:0007669"/>
    <property type="project" value="InterPro"/>
</dbReference>
<dbReference type="GO" id="GO:0046872">
    <property type="term" value="F:metal ion binding"/>
    <property type="evidence" value="ECO:0007669"/>
    <property type="project" value="UniProtKB-KW"/>
</dbReference>
<dbReference type="GO" id="GO:0015990">
    <property type="term" value="P:electron transport coupled proton transport"/>
    <property type="evidence" value="ECO:0007669"/>
    <property type="project" value="TreeGrafter"/>
</dbReference>
<dbReference type="GO" id="GO:0006123">
    <property type="term" value="P:mitochondrial electron transport, cytochrome c to oxygen"/>
    <property type="evidence" value="ECO:0007669"/>
    <property type="project" value="TreeGrafter"/>
</dbReference>
<dbReference type="FunFam" id="1.20.210.10:FF:000013">
    <property type="entry name" value="Cytochrome c oxidase subunit 1"/>
    <property type="match status" value="1"/>
</dbReference>
<dbReference type="Gene3D" id="1.20.210.10">
    <property type="entry name" value="Cytochrome c oxidase-like, subunit I domain"/>
    <property type="match status" value="1"/>
</dbReference>
<dbReference type="InterPro" id="IPR023616">
    <property type="entry name" value="Cyt_c_oxase-like_su1_dom"/>
</dbReference>
<dbReference type="InterPro" id="IPR036927">
    <property type="entry name" value="Cyt_c_oxase-like_su1_sf"/>
</dbReference>
<dbReference type="InterPro" id="IPR000883">
    <property type="entry name" value="Cyt_C_Oxase_1"/>
</dbReference>
<dbReference type="InterPro" id="IPR023615">
    <property type="entry name" value="Cyt_c_Oxase_su1_BS"/>
</dbReference>
<dbReference type="PANTHER" id="PTHR10422">
    <property type="entry name" value="CYTOCHROME C OXIDASE SUBUNIT 1"/>
    <property type="match status" value="1"/>
</dbReference>
<dbReference type="PANTHER" id="PTHR10422:SF18">
    <property type="entry name" value="CYTOCHROME C OXIDASE SUBUNIT 1"/>
    <property type="match status" value="1"/>
</dbReference>
<dbReference type="Pfam" id="PF00115">
    <property type="entry name" value="COX1"/>
    <property type="match status" value="1"/>
</dbReference>
<dbReference type="PRINTS" id="PR01165">
    <property type="entry name" value="CYCOXIDASEI"/>
</dbReference>
<dbReference type="SUPFAM" id="SSF81442">
    <property type="entry name" value="Cytochrome c oxidase subunit I-like"/>
    <property type="match status" value="1"/>
</dbReference>
<dbReference type="PROSITE" id="PS50855">
    <property type="entry name" value="COX1"/>
    <property type="match status" value="1"/>
</dbReference>
<dbReference type="PROSITE" id="PS00077">
    <property type="entry name" value="COX1_CUB"/>
    <property type="match status" value="1"/>
</dbReference>
<keyword id="KW-0106">Calcium</keyword>
<keyword id="KW-0186">Copper</keyword>
<keyword id="KW-0249">Electron transport</keyword>
<keyword id="KW-0349">Heme</keyword>
<keyword id="KW-0408">Iron</keyword>
<keyword id="KW-0472">Membrane</keyword>
<keyword id="KW-0479">Metal-binding</keyword>
<keyword id="KW-0496">Mitochondrion</keyword>
<keyword id="KW-0999">Mitochondrion inner membrane</keyword>
<keyword id="KW-0679">Respiratory chain</keyword>
<keyword id="KW-0915">Sodium</keyword>
<keyword id="KW-1278">Translocase</keyword>
<keyword id="KW-0812">Transmembrane</keyword>
<keyword id="KW-1133">Transmembrane helix</keyword>
<keyword id="KW-0813">Transport</keyword>
<organism>
    <name type="scientific">Casuarius bennetti</name>
    <name type="common">Dwarf cassowary</name>
    <dbReference type="NCBI Taxonomy" id="30463"/>
    <lineage>
        <taxon>Eukaryota</taxon>
        <taxon>Metazoa</taxon>
        <taxon>Chordata</taxon>
        <taxon>Craniata</taxon>
        <taxon>Vertebrata</taxon>
        <taxon>Euteleostomi</taxon>
        <taxon>Archelosauria</taxon>
        <taxon>Archosauria</taxon>
        <taxon>Dinosauria</taxon>
        <taxon>Saurischia</taxon>
        <taxon>Theropoda</taxon>
        <taxon>Coelurosauria</taxon>
        <taxon>Aves</taxon>
        <taxon>Palaeognathae</taxon>
        <taxon>Casuariiformes</taxon>
        <taxon>Casuariidae</taxon>
        <taxon>Casuarius</taxon>
    </lineage>
</organism>
<reference key="1">
    <citation type="book" date="1997" name="Avian molecular evolution and systematics">
        <title>Phylogenetic relationships of the ratite birds: resolving conflicts between molecular and morphological data sets.</title>
        <editorList>
            <person name="Mindell D.P."/>
        </editorList>
        <authorList>
            <person name="Lee K."/>
            <person name="Feinstein J."/>
            <person name="Cracraft J."/>
        </authorList>
    </citation>
    <scope>NUCLEOTIDE SEQUENCE [GENOMIC DNA]</scope>
</reference>
<proteinExistence type="inferred from homology"/>
<protein>
    <recommendedName>
        <fullName>Cytochrome c oxidase subunit 1</fullName>
        <ecNumber>7.1.1.9</ecNumber>
    </recommendedName>
    <alternativeName>
        <fullName>Cytochrome c oxidase polypeptide I</fullName>
    </alternativeName>
</protein>
<comment type="function">
    <text evidence="3">Component of the cytochrome c oxidase, the last enzyme in the mitochondrial electron transport chain which drives oxidative phosphorylation. The respiratory chain contains 3 multisubunit complexes succinate dehydrogenase (complex II, CII), ubiquinol-cytochrome c oxidoreductase (cytochrome b-c1 complex, complex III, CIII) and cytochrome c oxidase (complex IV, CIV), that cooperate to transfer electrons derived from NADH and succinate to molecular oxygen, creating an electrochemical gradient over the inner membrane that drives transmembrane transport and the ATP synthase. Cytochrome c oxidase is the component of the respiratory chain that catalyzes the reduction of oxygen to water. Electrons originating from reduced cytochrome c in the intermembrane space (IMS) are transferred via the dinuclear copper A center (CU(A)) of subunit 2 and heme A of subunit 1 to the active site in subunit 1, a binuclear center (BNC) formed by heme A3 and copper B (CU(B)). The BNC reduces molecular oxygen to 2 water molecules using 4 electrons from cytochrome c in the IMS and 4 protons from the mitochondrial matrix.</text>
</comment>
<comment type="catalytic activity">
    <reaction evidence="3">
        <text>4 Fe(II)-[cytochrome c] + O2 + 8 H(+)(in) = 4 Fe(III)-[cytochrome c] + 2 H2O + 4 H(+)(out)</text>
        <dbReference type="Rhea" id="RHEA:11436"/>
        <dbReference type="Rhea" id="RHEA-COMP:10350"/>
        <dbReference type="Rhea" id="RHEA-COMP:14399"/>
        <dbReference type="ChEBI" id="CHEBI:15377"/>
        <dbReference type="ChEBI" id="CHEBI:15378"/>
        <dbReference type="ChEBI" id="CHEBI:15379"/>
        <dbReference type="ChEBI" id="CHEBI:29033"/>
        <dbReference type="ChEBI" id="CHEBI:29034"/>
        <dbReference type="EC" id="7.1.1.9"/>
    </reaction>
    <physiologicalReaction direction="left-to-right" evidence="3">
        <dbReference type="Rhea" id="RHEA:11437"/>
    </physiologicalReaction>
</comment>
<comment type="cofactor">
    <cofactor evidence="2">
        <name>heme</name>
        <dbReference type="ChEBI" id="CHEBI:30413"/>
    </cofactor>
    <text evidence="2">Binds 2 heme A groups non-covalently per subunit.</text>
</comment>
<comment type="cofactor">
    <cofactor evidence="2">
        <name>Cu cation</name>
        <dbReference type="ChEBI" id="CHEBI:23378"/>
    </cofactor>
    <text evidence="2">Binds a copper B center.</text>
</comment>
<comment type="pathway">
    <text evidence="3">Energy metabolism; oxidative phosphorylation.</text>
</comment>
<comment type="subunit">
    <text evidence="1 2">Component of the cytochrome c oxidase (complex IV, CIV), a multisubunit enzyme composed of 14 subunits. The complex is composed of a catalytic core of 3 subunits MT-CO1, MT-CO2 and MT-CO3, encoded in the mitochondrial DNA, and 11 supernumerary subunits COX4I, COX5A, COX5B, COX6A, COX6B, COX6C, COX7A, COX7B, COX7C, COX8 and NDUFA4, which are encoded in the nuclear genome. The complex exists as a monomer or a dimer and forms supercomplexes (SCs) in the inner mitochondrial membrane with NADH-ubiquinone oxidoreductase (complex I, CI) and ubiquinol-cytochrome c oxidoreductase (cytochrome b-c1 complex, complex III, CIII), resulting in different assemblies (supercomplex SCI(1)III(2)IV(1) and megacomplex MCI(2)III(2)IV(2)) (By similarity). As a newly synthesized protein, rapidly incorporates into a multi-subunit assembly intermediate in the inner membrane, called MITRAC (mitochondrial translation regulation assembly intermediate of cytochrome c oxidase) complex, whose core components are COA3/MITRAC12 and COX14. Within the MITRAC complex, interacts with COA3 and with SMIM20/MITRAC7; the interaction with SMIM20 stabilizes the newly synthesized MT-CO1 and prevents its premature turnover. Interacts with TMEM177 in a COX20-dependent manner (By similarity).</text>
</comment>
<comment type="subcellular location">
    <subcellularLocation>
        <location evidence="2">Mitochondrion inner membrane</location>
        <topology evidence="2">Multi-pass membrane protein</topology>
    </subcellularLocation>
</comment>
<comment type="similarity">
    <text evidence="4">Belongs to the heme-copper respiratory oxidase family.</text>
</comment>
<geneLocation type="mitochondrion"/>
<feature type="chain" id="PRO_0000183304" description="Cytochrome c oxidase subunit 1">
    <location>
        <begin position="1"/>
        <end position="337" status="greater than"/>
    </location>
</feature>
<feature type="topological domain" description="Mitochondrial matrix" evidence="2">
    <location>
        <begin position="1"/>
        <end position="12"/>
    </location>
</feature>
<feature type="transmembrane region" description="Helical; Name=I" evidence="2">
    <location>
        <begin position="13"/>
        <end position="41"/>
    </location>
</feature>
<feature type="topological domain" description="Mitochondrial intermembrane" evidence="2">
    <location>
        <begin position="42"/>
        <end position="51"/>
    </location>
</feature>
<feature type="transmembrane region" description="Helical; Name=II" evidence="2">
    <location>
        <begin position="52"/>
        <end position="87"/>
    </location>
</feature>
<feature type="topological domain" description="Mitochondrial matrix" evidence="2">
    <location>
        <begin position="88"/>
        <end position="95"/>
    </location>
</feature>
<feature type="transmembrane region" description="Helical; Name=III" evidence="2">
    <location>
        <begin position="96"/>
        <end position="118"/>
    </location>
</feature>
<feature type="topological domain" description="Mitochondrial intermembrane" evidence="2">
    <location>
        <begin position="119"/>
        <end position="141"/>
    </location>
</feature>
<feature type="transmembrane region" description="Helical; Name=IV" evidence="2">
    <location>
        <begin position="142"/>
        <end position="171"/>
    </location>
</feature>
<feature type="topological domain" description="Mitochondrial matrix" evidence="2">
    <location>
        <begin position="172"/>
        <end position="183"/>
    </location>
</feature>
<feature type="transmembrane region" description="Helical; Name=V" evidence="2">
    <location>
        <begin position="184"/>
        <end position="213"/>
    </location>
</feature>
<feature type="topological domain" description="Mitochondrial intermembrane" evidence="2">
    <location>
        <begin position="214"/>
        <end position="228"/>
    </location>
</feature>
<feature type="transmembrane region" description="Helical; Name=VI" evidence="2">
    <location>
        <begin position="229"/>
        <end position="262"/>
    </location>
</feature>
<feature type="topological domain" description="Mitochondrial matrix" evidence="2">
    <location>
        <begin position="263"/>
        <end position="270"/>
    </location>
</feature>
<feature type="transmembrane region" description="Helical; Name=VII" evidence="2">
    <location>
        <begin position="271"/>
        <end position="287"/>
    </location>
</feature>
<feature type="topological domain" description="Mitochondrial intermembrane" evidence="2">
    <location>
        <begin position="288"/>
        <end position="299"/>
    </location>
</feature>
<feature type="transmembrane region" description="Helical; Name=VIII" evidence="2">
    <location>
        <begin position="300"/>
        <end position="328"/>
    </location>
</feature>
<feature type="topological domain" description="Mitochondrial matrix" evidence="2">
    <location>
        <begin position="329"/>
        <end position="337" status="greater than"/>
    </location>
</feature>
<feature type="binding site" evidence="2">
    <location>
        <position position="41"/>
    </location>
    <ligand>
        <name>Na(+)</name>
        <dbReference type="ChEBI" id="CHEBI:29101"/>
    </ligand>
</feature>
<feature type="binding site" evidence="2">
    <location>
        <position position="46"/>
    </location>
    <ligand>
        <name>Na(+)</name>
        <dbReference type="ChEBI" id="CHEBI:29101"/>
    </ligand>
</feature>
<feature type="binding site" description="axial binding residue" evidence="2">
    <location>
        <position position="62"/>
    </location>
    <ligand>
        <name>Fe(II)-heme a</name>
        <dbReference type="ChEBI" id="CHEBI:61715"/>
        <note>low-spin</note>
    </ligand>
    <ligandPart>
        <name>Fe</name>
        <dbReference type="ChEBI" id="CHEBI:18248"/>
    </ligandPart>
</feature>
<feature type="binding site" evidence="2">
    <location>
        <position position="241"/>
    </location>
    <ligand>
        <name>Cu cation</name>
        <dbReference type="ChEBI" id="CHEBI:23378"/>
        <label>B</label>
    </ligand>
</feature>
<feature type="binding site" evidence="2">
    <location>
        <position position="245"/>
    </location>
    <ligand>
        <name>O2</name>
        <dbReference type="ChEBI" id="CHEBI:15379"/>
    </ligand>
</feature>
<feature type="binding site" evidence="2">
    <location>
        <position position="291"/>
    </location>
    <ligand>
        <name>Cu cation</name>
        <dbReference type="ChEBI" id="CHEBI:23378"/>
        <label>B</label>
    </ligand>
</feature>
<feature type="binding site" evidence="2">
    <location>
        <position position="292"/>
    </location>
    <ligand>
        <name>Cu cation</name>
        <dbReference type="ChEBI" id="CHEBI:23378"/>
        <label>B</label>
    </ligand>
</feature>
<feature type="cross-link" description="1'-histidyl-3'-tyrosine (His-Tyr)" evidence="2">
    <location>
        <begin position="241"/>
        <end position="245"/>
    </location>
</feature>
<feature type="non-terminal residue">
    <location>
        <position position="337"/>
    </location>
</feature>
<sequence length="337" mass="36766">MTFITRWLFSTNHKDIGTLYLIFGAWAGMVGTALSLLIRAELGQPGTLLGDDQIYNVIVTAHAFVMIFFMVMPVMIGGFGNWLVPLMIGAPDMAFPRMNNMSFWLLPPSFLLLLASSTVEAGAGTGWTVYPPLAGNLAHAGASVDLAIFSLHLAGVSSILGAINFITTAINMKPPALTQYQTPLFVWSVLITAILLLLSLPVLAAGITMLLTDRNLNTTFFDPAGGGDPVLYQHLFWFFGHPEVYILILPGFGMISHVVTYYAGKKEPFGYMGMVWAMLSIGFLGFIVWAHHMFTVGMDVDTRAYFTSATMIIAIPTGIKVFSWLATLHGGTIKWDP</sequence>
<evidence type="ECO:0000250" key="1">
    <source>
        <dbReference type="UniProtKB" id="P00395"/>
    </source>
</evidence>
<evidence type="ECO:0000250" key="2">
    <source>
        <dbReference type="UniProtKB" id="P00396"/>
    </source>
</evidence>
<evidence type="ECO:0000250" key="3">
    <source>
        <dbReference type="UniProtKB" id="P00401"/>
    </source>
</evidence>
<evidence type="ECO:0000305" key="4"/>
<gene>
    <name type="primary">MT-CO1</name>
    <name type="synonym">COI</name>
    <name type="synonym">COXI</name>
    <name type="synonym">MTCO1</name>
</gene>